<accession>Q92R86</accession>
<name>GLNE_RHIME</name>
<organism>
    <name type="scientific">Rhizobium meliloti (strain 1021)</name>
    <name type="common">Ensifer meliloti</name>
    <name type="synonym">Sinorhizobium meliloti</name>
    <dbReference type="NCBI Taxonomy" id="266834"/>
    <lineage>
        <taxon>Bacteria</taxon>
        <taxon>Pseudomonadati</taxon>
        <taxon>Pseudomonadota</taxon>
        <taxon>Alphaproteobacteria</taxon>
        <taxon>Hyphomicrobiales</taxon>
        <taxon>Rhizobiaceae</taxon>
        <taxon>Sinorhizobium/Ensifer group</taxon>
        <taxon>Sinorhizobium</taxon>
    </lineage>
</organism>
<proteinExistence type="inferred from homology"/>
<keyword id="KW-0067">ATP-binding</keyword>
<keyword id="KW-0460">Magnesium</keyword>
<keyword id="KW-0511">Multifunctional enzyme</keyword>
<keyword id="KW-0547">Nucleotide-binding</keyword>
<keyword id="KW-0548">Nucleotidyltransferase</keyword>
<keyword id="KW-1185">Reference proteome</keyword>
<keyword id="KW-0808">Transferase</keyword>
<protein>
    <recommendedName>
        <fullName evidence="1">Bifunctional glutamine synthetase adenylyltransferase/adenylyl-removing enzyme</fullName>
    </recommendedName>
    <alternativeName>
        <fullName evidence="1">ATP:glutamine synthetase adenylyltransferase</fullName>
    </alternativeName>
    <alternativeName>
        <fullName evidence="1">ATase</fullName>
    </alternativeName>
    <domain>
        <recommendedName>
            <fullName evidence="1">Glutamine synthetase adenylyl-L-tyrosine phosphorylase</fullName>
            <ecNumber evidence="1">2.7.7.89</ecNumber>
        </recommendedName>
        <alternativeName>
            <fullName evidence="1">Adenylyl removase</fullName>
            <shortName evidence="1">AR</shortName>
            <shortName evidence="1">AT-N</shortName>
        </alternativeName>
    </domain>
    <domain>
        <recommendedName>
            <fullName evidence="1">Glutamine synthetase adenylyl transferase</fullName>
            <ecNumber evidence="1">2.7.7.42</ecNumber>
        </recommendedName>
        <alternativeName>
            <fullName evidence="1">Adenylyl transferase</fullName>
            <shortName evidence="1">AT</shortName>
            <shortName evidence="1">AT-C</shortName>
        </alternativeName>
    </domain>
</protein>
<evidence type="ECO:0000255" key="1">
    <source>
        <dbReference type="HAMAP-Rule" id="MF_00802"/>
    </source>
</evidence>
<dbReference type="EC" id="2.7.7.89" evidence="1"/>
<dbReference type="EC" id="2.7.7.42" evidence="1"/>
<dbReference type="EMBL" id="AL591688">
    <property type="protein sequence ID" value="CAC45596.1"/>
    <property type="molecule type" value="Genomic_DNA"/>
</dbReference>
<dbReference type="RefSeq" id="NP_385130.1">
    <property type="nucleotide sequence ID" value="NC_003047.1"/>
</dbReference>
<dbReference type="RefSeq" id="WP_010968993.1">
    <property type="nucleotide sequence ID" value="NC_003047.1"/>
</dbReference>
<dbReference type="SMR" id="Q92R86"/>
<dbReference type="EnsemblBacteria" id="CAC45596">
    <property type="protein sequence ID" value="CAC45596"/>
    <property type="gene ID" value="SMc02368"/>
</dbReference>
<dbReference type="KEGG" id="sme:SMc02368"/>
<dbReference type="PATRIC" id="fig|266834.11.peg.2429"/>
<dbReference type="eggNOG" id="COG1391">
    <property type="taxonomic scope" value="Bacteria"/>
</dbReference>
<dbReference type="HOGENOM" id="CLU_006233_0_0_5"/>
<dbReference type="OrthoDB" id="9759366at2"/>
<dbReference type="Proteomes" id="UP000001976">
    <property type="component" value="Chromosome"/>
</dbReference>
<dbReference type="GO" id="GO:0005829">
    <property type="term" value="C:cytosol"/>
    <property type="evidence" value="ECO:0007669"/>
    <property type="project" value="TreeGrafter"/>
</dbReference>
<dbReference type="GO" id="GO:0008882">
    <property type="term" value="F:[glutamate-ammonia-ligase] adenylyltransferase activity"/>
    <property type="evidence" value="ECO:0007669"/>
    <property type="project" value="UniProtKB-UniRule"/>
</dbReference>
<dbReference type="GO" id="GO:0047388">
    <property type="term" value="F:[glutamine synthetase]-adenylyl-L-tyrosine phosphorylase activity"/>
    <property type="evidence" value="ECO:0007669"/>
    <property type="project" value="UniProtKB-EC"/>
</dbReference>
<dbReference type="GO" id="GO:0005524">
    <property type="term" value="F:ATP binding"/>
    <property type="evidence" value="ECO:0007669"/>
    <property type="project" value="UniProtKB-UniRule"/>
</dbReference>
<dbReference type="GO" id="GO:0000287">
    <property type="term" value="F:magnesium ion binding"/>
    <property type="evidence" value="ECO:0007669"/>
    <property type="project" value="UniProtKB-UniRule"/>
</dbReference>
<dbReference type="GO" id="GO:0000820">
    <property type="term" value="P:regulation of glutamine family amino acid metabolic process"/>
    <property type="evidence" value="ECO:0007669"/>
    <property type="project" value="UniProtKB-UniRule"/>
</dbReference>
<dbReference type="CDD" id="cd05401">
    <property type="entry name" value="NT_GlnE_GlnD_like"/>
    <property type="match status" value="2"/>
</dbReference>
<dbReference type="Gene3D" id="1.20.120.1510">
    <property type="match status" value="1"/>
</dbReference>
<dbReference type="Gene3D" id="3.30.460.10">
    <property type="entry name" value="Beta Polymerase, domain 2"/>
    <property type="match status" value="2"/>
</dbReference>
<dbReference type="Gene3D" id="1.20.120.330">
    <property type="entry name" value="Nucleotidyltransferases domain 2"/>
    <property type="match status" value="2"/>
</dbReference>
<dbReference type="HAMAP" id="MF_00802">
    <property type="entry name" value="GlnE"/>
    <property type="match status" value="1"/>
</dbReference>
<dbReference type="InterPro" id="IPR023057">
    <property type="entry name" value="GlnE"/>
</dbReference>
<dbReference type="InterPro" id="IPR005190">
    <property type="entry name" value="GlnE_rpt_dom"/>
</dbReference>
<dbReference type="InterPro" id="IPR043519">
    <property type="entry name" value="NT_sf"/>
</dbReference>
<dbReference type="InterPro" id="IPR013546">
    <property type="entry name" value="PII_UdlTrfase/GS_AdlTrfase"/>
</dbReference>
<dbReference type="NCBIfam" id="NF008292">
    <property type="entry name" value="PRK11072.1"/>
    <property type="match status" value="1"/>
</dbReference>
<dbReference type="NCBIfam" id="NF010706">
    <property type="entry name" value="PRK14108.1"/>
    <property type="match status" value="1"/>
</dbReference>
<dbReference type="PANTHER" id="PTHR30621:SF0">
    <property type="entry name" value="BIFUNCTIONAL GLUTAMINE SYNTHETASE ADENYLYLTRANSFERASE_ADENYLYL-REMOVING ENZYME"/>
    <property type="match status" value="1"/>
</dbReference>
<dbReference type="PANTHER" id="PTHR30621">
    <property type="entry name" value="GLUTAMINE SYNTHETASE ADENYLYLTRANSFERASE"/>
    <property type="match status" value="1"/>
</dbReference>
<dbReference type="Pfam" id="PF08335">
    <property type="entry name" value="GlnD_UR_UTase"/>
    <property type="match status" value="1"/>
</dbReference>
<dbReference type="Pfam" id="PF03710">
    <property type="entry name" value="GlnE"/>
    <property type="match status" value="2"/>
</dbReference>
<dbReference type="SUPFAM" id="SSF81301">
    <property type="entry name" value="Nucleotidyltransferase"/>
    <property type="match status" value="2"/>
</dbReference>
<dbReference type="SUPFAM" id="SSF81593">
    <property type="entry name" value="Nucleotidyltransferase substrate binding subunit/domain"/>
    <property type="match status" value="2"/>
</dbReference>
<comment type="function">
    <text evidence="1">Involved in the regulation of glutamine synthetase GlnA, a key enzyme in the process to assimilate ammonia. When cellular nitrogen levels are high, the C-terminal adenylyl transferase (AT) inactivates GlnA by covalent transfer of an adenylyl group from ATP to specific tyrosine residue of GlnA, thus reducing its activity. Conversely, when nitrogen levels are low, the N-terminal adenylyl removase (AR) activates GlnA by removing the adenylyl group by phosphorolysis, increasing its activity. The regulatory region of GlnE binds the signal transduction protein PII (GlnB) which indicates the nitrogen status of the cell.</text>
</comment>
<comment type="catalytic activity">
    <reaction evidence="1">
        <text>[glutamine synthetase]-O(4)-(5'-adenylyl)-L-tyrosine + phosphate = [glutamine synthetase]-L-tyrosine + ADP</text>
        <dbReference type="Rhea" id="RHEA:43716"/>
        <dbReference type="Rhea" id="RHEA-COMP:10660"/>
        <dbReference type="Rhea" id="RHEA-COMP:10661"/>
        <dbReference type="ChEBI" id="CHEBI:43474"/>
        <dbReference type="ChEBI" id="CHEBI:46858"/>
        <dbReference type="ChEBI" id="CHEBI:83624"/>
        <dbReference type="ChEBI" id="CHEBI:456216"/>
        <dbReference type="EC" id="2.7.7.89"/>
    </reaction>
</comment>
<comment type="catalytic activity">
    <reaction evidence="1">
        <text>[glutamine synthetase]-L-tyrosine + ATP = [glutamine synthetase]-O(4)-(5'-adenylyl)-L-tyrosine + diphosphate</text>
        <dbReference type="Rhea" id="RHEA:18589"/>
        <dbReference type="Rhea" id="RHEA-COMP:10660"/>
        <dbReference type="Rhea" id="RHEA-COMP:10661"/>
        <dbReference type="ChEBI" id="CHEBI:30616"/>
        <dbReference type="ChEBI" id="CHEBI:33019"/>
        <dbReference type="ChEBI" id="CHEBI:46858"/>
        <dbReference type="ChEBI" id="CHEBI:83624"/>
        <dbReference type="EC" id="2.7.7.42"/>
    </reaction>
</comment>
<comment type="cofactor">
    <cofactor evidence="1">
        <name>Mg(2+)</name>
        <dbReference type="ChEBI" id="CHEBI:18420"/>
    </cofactor>
</comment>
<comment type="similarity">
    <text evidence="1">Belongs to the GlnE family.</text>
</comment>
<sequence length="986" mass="108470">MAEAIERSLSDIDVVAIRPASQADAKAALSVLKDAAKGSDHIAKLIASDAPLKDFLVAAFALSPFLRDTARSHPAILEALLSETLPAFLKRRIEAARVAWRGDAAGAALPDAEIMTRLRRAKREVAFAVALADLSRLFGGRETTGWLSDFAEAAVSAAIDHLLLGAHESGKFVLKDSSAPSTASGVVVLGMGKLGAGELNYSSDIDLVVFYDPQSSIITNRDDAPETFARLLRRLIRILQERTGDGYVFRTDLRLRPDPGSTPLAIPVEAAMLYYESRGQNWERAAFIKARPIAGDLEAGERFLKELTPFVFRKYLDYAAIADIHSIKRQIHAHKGHGEIAVKGHNIKLGRGGIREIEFFVQTQQLIAGGRTPALRLRQTETMLRMLAESGWIDGATAEELIEAYWFLRDVEHRIQMVHDEQTHLLPETEPELRRIAYMLGFEDTASFSNALSRVLRTVERRYAQLFEQEAKLSTETGNLVFTGQQDDPDTLETLKKLGFQRPSDIANIIRTWHYGRYRATQSVEARERLTELTPELLRVFGESRRADEAFLRFDHFLSGLPAGIQLFSLLGNNPGLLSLIVNIMSSAPRLADIIAAKPHVFDGMLEPGLLAELPTRDYLAPRIATFVGGGRHYEEVLDRLRIIAAEQRFLIGIRLLTGAITGLQAGRALTDLADLIIAAALDAVLEEVRSAHGRFPGGRVAIVGMGKLGSHELTAGSDIDLILLYDYDDEVLESDGAKPLDPVRYFTRVTQRLIAALSAPTAEGILYDVDMRLRPSGNKGPVATRITAFAKYQRTEAWTWEHLALTRARCICGDESLVGEAEAIFAEILTEKRDIAKIRKDVEEMRGLIDKEKPPKDIWDFKLIPGGLVDIEFIAQYLALVAPARGVTSPPAGTHTLEALKALGAGMMNANDLDTAAEALVLFTELSQLVRLCIDGDFDPKEAPAGLVDLVCRAGDYPDLTHLEADIRRLSKAVRRIFQGVVAAA</sequence>
<feature type="chain" id="PRO_0000209272" description="Bifunctional glutamine synthetase adenylyltransferase/adenylyl-removing enzyme">
    <location>
        <begin position="1"/>
        <end position="986"/>
    </location>
</feature>
<feature type="region of interest" description="Adenylyl removase" evidence="1">
    <location>
        <begin position="1"/>
        <end position="471"/>
    </location>
</feature>
<feature type="region of interest" description="Adenylyl transferase" evidence="1">
    <location>
        <begin position="475"/>
        <end position="986"/>
    </location>
</feature>
<reference key="1">
    <citation type="journal article" date="2001" name="Proc. Natl. Acad. Sci. U.S.A.">
        <title>Analysis of the chromosome sequence of the legume symbiont Sinorhizobium meliloti strain 1021.</title>
        <authorList>
            <person name="Capela D."/>
            <person name="Barloy-Hubler F."/>
            <person name="Gouzy J."/>
            <person name="Bothe G."/>
            <person name="Ampe F."/>
            <person name="Batut J."/>
            <person name="Boistard P."/>
            <person name="Becker A."/>
            <person name="Boutry M."/>
            <person name="Cadieu E."/>
            <person name="Dreano S."/>
            <person name="Gloux S."/>
            <person name="Godrie T."/>
            <person name="Goffeau A."/>
            <person name="Kahn D."/>
            <person name="Kiss E."/>
            <person name="Lelaure V."/>
            <person name="Masuy D."/>
            <person name="Pohl T."/>
            <person name="Portetelle D."/>
            <person name="Puehler A."/>
            <person name="Purnelle B."/>
            <person name="Ramsperger U."/>
            <person name="Renard C."/>
            <person name="Thebault P."/>
            <person name="Vandenbol M."/>
            <person name="Weidner S."/>
            <person name="Galibert F."/>
        </authorList>
    </citation>
    <scope>NUCLEOTIDE SEQUENCE [LARGE SCALE GENOMIC DNA]</scope>
    <source>
        <strain>1021</strain>
    </source>
</reference>
<reference key="2">
    <citation type="journal article" date="2001" name="Science">
        <title>The composite genome of the legume symbiont Sinorhizobium meliloti.</title>
        <authorList>
            <person name="Galibert F."/>
            <person name="Finan T.M."/>
            <person name="Long S.R."/>
            <person name="Puehler A."/>
            <person name="Abola P."/>
            <person name="Ampe F."/>
            <person name="Barloy-Hubler F."/>
            <person name="Barnett M.J."/>
            <person name="Becker A."/>
            <person name="Boistard P."/>
            <person name="Bothe G."/>
            <person name="Boutry M."/>
            <person name="Bowser L."/>
            <person name="Buhrmester J."/>
            <person name="Cadieu E."/>
            <person name="Capela D."/>
            <person name="Chain P."/>
            <person name="Cowie A."/>
            <person name="Davis R.W."/>
            <person name="Dreano S."/>
            <person name="Federspiel N.A."/>
            <person name="Fisher R.F."/>
            <person name="Gloux S."/>
            <person name="Godrie T."/>
            <person name="Goffeau A."/>
            <person name="Golding B."/>
            <person name="Gouzy J."/>
            <person name="Gurjal M."/>
            <person name="Hernandez-Lucas I."/>
            <person name="Hong A."/>
            <person name="Huizar L."/>
            <person name="Hyman R.W."/>
            <person name="Jones T."/>
            <person name="Kahn D."/>
            <person name="Kahn M.L."/>
            <person name="Kalman S."/>
            <person name="Keating D.H."/>
            <person name="Kiss E."/>
            <person name="Komp C."/>
            <person name="Lelaure V."/>
            <person name="Masuy D."/>
            <person name="Palm C."/>
            <person name="Peck M.C."/>
            <person name="Pohl T.M."/>
            <person name="Portetelle D."/>
            <person name="Purnelle B."/>
            <person name="Ramsperger U."/>
            <person name="Surzycki R."/>
            <person name="Thebault P."/>
            <person name="Vandenbol M."/>
            <person name="Vorhoelter F.J."/>
            <person name="Weidner S."/>
            <person name="Wells D.H."/>
            <person name="Wong K."/>
            <person name="Yeh K.-C."/>
            <person name="Batut J."/>
        </authorList>
    </citation>
    <scope>NUCLEOTIDE SEQUENCE [LARGE SCALE GENOMIC DNA]</scope>
    <source>
        <strain>1021</strain>
    </source>
</reference>
<gene>
    <name evidence="1" type="primary">glnE</name>
    <name type="ordered locus">R01024</name>
    <name type="ORF">SMc02368</name>
</gene>